<evidence type="ECO:0000255" key="1">
    <source>
        <dbReference type="HAMAP-Rule" id="MF_00041"/>
    </source>
</evidence>
<protein>
    <recommendedName>
        <fullName evidence="1">Cysteine--tRNA ligase</fullName>
        <ecNumber evidence="1">6.1.1.16</ecNumber>
    </recommendedName>
    <alternativeName>
        <fullName evidence="1">Cysteinyl-tRNA synthetase</fullName>
        <shortName evidence="1">CysRS</shortName>
    </alternativeName>
</protein>
<comment type="catalytic activity">
    <reaction evidence="1">
        <text>tRNA(Cys) + L-cysteine + ATP = L-cysteinyl-tRNA(Cys) + AMP + diphosphate</text>
        <dbReference type="Rhea" id="RHEA:17773"/>
        <dbReference type="Rhea" id="RHEA-COMP:9661"/>
        <dbReference type="Rhea" id="RHEA-COMP:9679"/>
        <dbReference type="ChEBI" id="CHEBI:30616"/>
        <dbReference type="ChEBI" id="CHEBI:33019"/>
        <dbReference type="ChEBI" id="CHEBI:35235"/>
        <dbReference type="ChEBI" id="CHEBI:78442"/>
        <dbReference type="ChEBI" id="CHEBI:78517"/>
        <dbReference type="ChEBI" id="CHEBI:456215"/>
        <dbReference type="EC" id="6.1.1.16"/>
    </reaction>
</comment>
<comment type="cofactor">
    <cofactor evidence="1">
        <name>Zn(2+)</name>
        <dbReference type="ChEBI" id="CHEBI:29105"/>
    </cofactor>
    <text evidence="1">Binds 1 zinc ion per subunit.</text>
</comment>
<comment type="subunit">
    <text evidence="1">Monomer.</text>
</comment>
<comment type="subcellular location">
    <subcellularLocation>
        <location evidence="1">Cytoplasm</location>
    </subcellularLocation>
</comment>
<comment type="similarity">
    <text evidence="1">Belongs to the class-I aminoacyl-tRNA synthetase family.</text>
</comment>
<feature type="chain" id="PRO_1000090844" description="Cysteine--tRNA ligase">
    <location>
        <begin position="1"/>
        <end position="465"/>
    </location>
</feature>
<feature type="short sequence motif" description="'HIGH' region">
    <location>
        <begin position="29"/>
        <end position="39"/>
    </location>
</feature>
<feature type="short sequence motif" description="'KMSKS' region">
    <location>
        <begin position="269"/>
        <end position="273"/>
    </location>
</feature>
<feature type="binding site" evidence="1">
    <location>
        <position position="27"/>
    </location>
    <ligand>
        <name>Zn(2+)</name>
        <dbReference type="ChEBI" id="CHEBI:29105"/>
    </ligand>
</feature>
<feature type="binding site" evidence="1">
    <location>
        <position position="207"/>
    </location>
    <ligand>
        <name>Zn(2+)</name>
        <dbReference type="ChEBI" id="CHEBI:29105"/>
    </ligand>
</feature>
<feature type="binding site" evidence="1">
    <location>
        <position position="237"/>
    </location>
    <ligand>
        <name>Zn(2+)</name>
        <dbReference type="ChEBI" id="CHEBI:29105"/>
    </ligand>
</feature>
<feature type="binding site" evidence="1">
    <location>
        <position position="241"/>
    </location>
    <ligand>
        <name>Zn(2+)</name>
        <dbReference type="ChEBI" id="CHEBI:29105"/>
    </ligand>
</feature>
<feature type="binding site" evidence="1">
    <location>
        <position position="272"/>
    </location>
    <ligand>
        <name>ATP</name>
        <dbReference type="ChEBI" id="CHEBI:30616"/>
    </ligand>
</feature>
<keyword id="KW-0030">Aminoacyl-tRNA synthetase</keyword>
<keyword id="KW-0067">ATP-binding</keyword>
<keyword id="KW-0963">Cytoplasm</keyword>
<keyword id="KW-0436">Ligase</keyword>
<keyword id="KW-0479">Metal-binding</keyword>
<keyword id="KW-0547">Nucleotide-binding</keyword>
<keyword id="KW-0648">Protein biosynthesis</keyword>
<keyword id="KW-1185">Reference proteome</keyword>
<keyword id="KW-0862">Zinc</keyword>
<dbReference type="EC" id="6.1.1.16" evidence="1"/>
<dbReference type="EMBL" id="CP001173">
    <property type="protein sequence ID" value="ACI27594.1"/>
    <property type="molecule type" value="Genomic_DNA"/>
</dbReference>
<dbReference type="RefSeq" id="WP_000471366.1">
    <property type="nucleotide sequence ID" value="NC_011333.1"/>
</dbReference>
<dbReference type="SMR" id="B5Z7P5"/>
<dbReference type="KEGG" id="hpg:HPG27_839"/>
<dbReference type="HOGENOM" id="CLU_013528_0_1_7"/>
<dbReference type="Proteomes" id="UP000001735">
    <property type="component" value="Chromosome"/>
</dbReference>
<dbReference type="GO" id="GO:0005829">
    <property type="term" value="C:cytosol"/>
    <property type="evidence" value="ECO:0007669"/>
    <property type="project" value="TreeGrafter"/>
</dbReference>
<dbReference type="GO" id="GO:0005524">
    <property type="term" value="F:ATP binding"/>
    <property type="evidence" value="ECO:0007669"/>
    <property type="project" value="UniProtKB-UniRule"/>
</dbReference>
<dbReference type="GO" id="GO:0004817">
    <property type="term" value="F:cysteine-tRNA ligase activity"/>
    <property type="evidence" value="ECO:0007669"/>
    <property type="project" value="UniProtKB-UniRule"/>
</dbReference>
<dbReference type="GO" id="GO:0008270">
    <property type="term" value="F:zinc ion binding"/>
    <property type="evidence" value="ECO:0007669"/>
    <property type="project" value="UniProtKB-UniRule"/>
</dbReference>
<dbReference type="GO" id="GO:0006423">
    <property type="term" value="P:cysteinyl-tRNA aminoacylation"/>
    <property type="evidence" value="ECO:0007669"/>
    <property type="project" value="UniProtKB-UniRule"/>
</dbReference>
<dbReference type="CDD" id="cd00672">
    <property type="entry name" value="CysRS_core"/>
    <property type="match status" value="1"/>
</dbReference>
<dbReference type="FunFam" id="1.20.120.1910:FF:000013">
    <property type="entry name" value="Cysteine--tRNA ligase"/>
    <property type="match status" value="1"/>
</dbReference>
<dbReference type="FunFam" id="3.40.50.620:FF:000339">
    <property type="entry name" value="Cysteine--tRNA ligase"/>
    <property type="match status" value="1"/>
</dbReference>
<dbReference type="Gene3D" id="1.20.120.1910">
    <property type="entry name" value="Cysteine-tRNA ligase, C-terminal anti-codon recognition domain"/>
    <property type="match status" value="1"/>
</dbReference>
<dbReference type="Gene3D" id="3.40.50.620">
    <property type="entry name" value="HUPs"/>
    <property type="match status" value="1"/>
</dbReference>
<dbReference type="HAMAP" id="MF_00041">
    <property type="entry name" value="Cys_tRNA_synth"/>
    <property type="match status" value="1"/>
</dbReference>
<dbReference type="InterPro" id="IPR015803">
    <property type="entry name" value="Cys-tRNA-ligase"/>
</dbReference>
<dbReference type="InterPro" id="IPR015273">
    <property type="entry name" value="Cys-tRNA-synt_Ia_DALR"/>
</dbReference>
<dbReference type="InterPro" id="IPR024909">
    <property type="entry name" value="Cys-tRNA/MSH_ligase"/>
</dbReference>
<dbReference type="InterPro" id="IPR014729">
    <property type="entry name" value="Rossmann-like_a/b/a_fold"/>
</dbReference>
<dbReference type="InterPro" id="IPR032678">
    <property type="entry name" value="tRNA-synt_1_cat_dom"/>
</dbReference>
<dbReference type="InterPro" id="IPR009080">
    <property type="entry name" value="tRNAsynth_Ia_anticodon-bd"/>
</dbReference>
<dbReference type="NCBIfam" id="TIGR00435">
    <property type="entry name" value="cysS"/>
    <property type="match status" value="1"/>
</dbReference>
<dbReference type="PANTHER" id="PTHR10890:SF3">
    <property type="entry name" value="CYSTEINE--TRNA LIGASE, CYTOPLASMIC"/>
    <property type="match status" value="1"/>
</dbReference>
<dbReference type="PANTHER" id="PTHR10890">
    <property type="entry name" value="CYSTEINYL-TRNA SYNTHETASE"/>
    <property type="match status" value="1"/>
</dbReference>
<dbReference type="Pfam" id="PF09190">
    <property type="entry name" value="DALR_2"/>
    <property type="match status" value="1"/>
</dbReference>
<dbReference type="Pfam" id="PF01406">
    <property type="entry name" value="tRNA-synt_1e"/>
    <property type="match status" value="1"/>
</dbReference>
<dbReference type="PRINTS" id="PR00983">
    <property type="entry name" value="TRNASYNTHCYS"/>
</dbReference>
<dbReference type="SMART" id="SM00840">
    <property type="entry name" value="DALR_2"/>
    <property type="match status" value="1"/>
</dbReference>
<dbReference type="SUPFAM" id="SSF47323">
    <property type="entry name" value="Anticodon-binding domain of a subclass of class I aminoacyl-tRNA synthetases"/>
    <property type="match status" value="1"/>
</dbReference>
<dbReference type="SUPFAM" id="SSF52374">
    <property type="entry name" value="Nucleotidylyl transferase"/>
    <property type="match status" value="1"/>
</dbReference>
<name>SYC_HELPG</name>
<accession>B5Z7P5</accession>
<organism>
    <name type="scientific">Helicobacter pylori (strain G27)</name>
    <dbReference type="NCBI Taxonomy" id="563041"/>
    <lineage>
        <taxon>Bacteria</taxon>
        <taxon>Pseudomonadati</taxon>
        <taxon>Campylobacterota</taxon>
        <taxon>Epsilonproteobacteria</taxon>
        <taxon>Campylobacterales</taxon>
        <taxon>Helicobacteraceae</taxon>
        <taxon>Helicobacter</taxon>
    </lineage>
</organism>
<sequence>MFIYDTKSKQKVPFEPLVEKKANIYVCGPTVYDDAHLGHARSAIAFDLLRRTLELSGYEVMLVRNFTDIDDKIINKAFKENKSIQELSSVYIESYTRDLNALNVKKPSLEPKASEYLDAMVRMIETLLEKNIAYRVSNGDIYLDTTKDKDYGSLSVHNSSMEFSRIGLVQEKRLEQDFVLWKSYKGDNDVGFDSPLGKGRPGWHIECSSMVFETLALANAPYQIDIHAGGADLLFPHHENEACQTRCAFGVELAKYWMHNGFVNINNEKMSKSLGNSFFIKDALKNYDGEILRNYLLGVHYRSVLNFNEEDLLVSKKRLDKIYRLKQRVSGTLGGINPNFKKEILECMQDDLNVSKALSVLESMLSSTNEKLDQNPKNKALKGEILANLKFIEELLGIGFKDPSAYFQLGVSESEKQEIENKIEERKRAKEQKDFLKADSIREELLNHKIALMDTPQGTIWEKLF</sequence>
<reference key="1">
    <citation type="journal article" date="2009" name="J. Bacteriol.">
        <title>The complete genome sequence of Helicobacter pylori strain G27.</title>
        <authorList>
            <person name="Baltrus D.A."/>
            <person name="Amieva M.R."/>
            <person name="Covacci A."/>
            <person name="Lowe T.M."/>
            <person name="Merrell D.S."/>
            <person name="Ottemann K.M."/>
            <person name="Stein M."/>
            <person name="Salama N.R."/>
            <person name="Guillemin K."/>
        </authorList>
    </citation>
    <scope>NUCLEOTIDE SEQUENCE [LARGE SCALE GENOMIC DNA]</scope>
    <source>
        <strain>G27</strain>
    </source>
</reference>
<gene>
    <name evidence="1" type="primary">cysS</name>
    <name type="ordered locus">HPG27_839</name>
</gene>
<proteinExistence type="inferred from homology"/>